<comment type="subcellular location">
    <subcellularLocation>
        <location evidence="1">Periplasm</location>
    </subcellularLocation>
</comment>
<proteinExistence type="inferred from homology"/>
<feature type="signal peptide" evidence="1">
    <location>
        <begin position="1"/>
        <end position="21"/>
    </location>
</feature>
<feature type="chain" id="PRO_0000002861" description="Azurin">
    <location>
        <begin position="22"/>
        <end position="150"/>
    </location>
</feature>
<feature type="domain" description="Plastocyanin-like">
    <location>
        <begin position="22"/>
        <end position="150"/>
    </location>
</feature>
<feature type="binding site" evidence="1">
    <location>
        <position position="67"/>
    </location>
    <ligand>
        <name>Cu cation</name>
        <dbReference type="ChEBI" id="CHEBI:23378"/>
    </ligand>
</feature>
<feature type="binding site" evidence="1">
    <location>
        <position position="133"/>
    </location>
    <ligand>
        <name>Cu cation</name>
        <dbReference type="ChEBI" id="CHEBI:23378"/>
    </ligand>
</feature>
<feature type="binding site" evidence="1">
    <location>
        <position position="138"/>
    </location>
    <ligand>
        <name>Cu cation</name>
        <dbReference type="ChEBI" id="CHEBI:23378"/>
    </ligand>
</feature>
<feature type="binding site" evidence="1">
    <location>
        <position position="142"/>
    </location>
    <ligand>
        <name>Cu cation</name>
        <dbReference type="ChEBI" id="CHEBI:23378"/>
    </ligand>
</feature>
<feature type="disulfide bond" evidence="1">
    <location>
        <begin position="24"/>
        <end position="47"/>
    </location>
</feature>
<sequence>MFKQVLGGMALMAAFSAPVLAAECSVDIAGTDQMQFDKKAIEVSKSCKQFTVNLKHTGKLPRNVMGHNWVLTKTADMQAVEKDGIAAGLDNQYLKAGDTRVLAHTKVLGGGESDSVTFDVAKLAAGDDYTFFCSFPGHGALMKGTLKLVD</sequence>
<protein>
    <recommendedName>
        <fullName>Azurin</fullName>
    </recommendedName>
</protein>
<organism>
    <name type="scientific">Bordetella pertussis (strain Tohama I / ATCC BAA-589 / NCTC 13251)</name>
    <dbReference type="NCBI Taxonomy" id="257313"/>
    <lineage>
        <taxon>Bacteria</taxon>
        <taxon>Pseudomonadati</taxon>
        <taxon>Pseudomonadota</taxon>
        <taxon>Betaproteobacteria</taxon>
        <taxon>Burkholderiales</taxon>
        <taxon>Alcaligenaceae</taxon>
        <taxon>Bordetella</taxon>
    </lineage>
</organism>
<reference key="1">
    <citation type="journal article" date="2003" name="Nat. Genet.">
        <title>Comparative analysis of the genome sequences of Bordetella pertussis, Bordetella parapertussis and Bordetella bronchiseptica.</title>
        <authorList>
            <person name="Parkhill J."/>
            <person name="Sebaihia M."/>
            <person name="Preston A."/>
            <person name="Murphy L.D."/>
            <person name="Thomson N.R."/>
            <person name="Harris D.E."/>
            <person name="Holden M.T.G."/>
            <person name="Churcher C.M."/>
            <person name="Bentley S.D."/>
            <person name="Mungall K.L."/>
            <person name="Cerdeno-Tarraga A.-M."/>
            <person name="Temple L."/>
            <person name="James K.D."/>
            <person name="Harris B."/>
            <person name="Quail M.A."/>
            <person name="Achtman M."/>
            <person name="Atkin R."/>
            <person name="Baker S."/>
            <person name="Basham D."/>
            <person name="Bason N."/>
            <person name="Cherevach I."/>
            <person name="Chillingworth T."/>
            <person name="Collins M."/>
            <person name="Cronin A."/>
            <person name="Davis P."/>
            <person name="Doggett J."/>
            <person name="Feltwell T."/>
            <person name="Goble A."/>
            <person name="Hamlin N."/>
            <person name="Hauser H."/>
            <person name="Holroyd S."/>
            <person name="Jagels K."/>
            <person name="Leather S."/>
            <person name="Moule S."/>
            <person name="Norberczak H."/>
            <person name="O'Neil S."/>
            <person name="Ormond D."/>
            <person name="Price C."/>
            <person name="Rabbinowitsch E."/>
            <person name="Rutter S."/>
            <person name="Sanders M."/>
            <person name="Saunders D."/>
            <person name="Seeger K."/>
            <person name="Sharp S."/>
            <person name="Simmonds M."/>
            <person name="Skelton J."/>
            <person name="Squares R."/>
            <person name="Squares S."/>
            <person name="Stevens K."/>
            <person name="Unwin L."/>
            <person name="Whitehead S."/>
            <person name="Barrell B.G."/>
            <person name="Maskell D.J."/>
        </authorList>
    </citation>
    <scope>NUCLEOTIDE SEQUENCE [LARGE SCALE GENOMIC DNA]</scope>
    <source>
        <strain>Tohama I / ATCC BAA-589 / NCTC 13251</strain>
    </source>
</reference>
<name>AZUR_BORPE</name>
<accession>P0A320</accession>
<accession>P00278</accession>
<dbReference type="EMBL" id="BX640413">
    <property type="protein sequence ID" value="CAE41127.1"/>
    <property type="molecule type" value="Genomic_DNA"/>
</dbReference>
<dbReference type="RefSeq" id="NP_879636.1">
    <property type="nucleotide sequence ID" value="NC_002929.2"/>
</dbReference>
<dbReference type="SMR" id="P0A320"/>
<dbReference type="STRING" id="257313.BP0824"/>
<dbReference type="PaxDb" id="257313-BP0824"/>
<dbReference type="KEGG" id="bpe:BP0824"/>
<dbReference type="PATRIC" id="fig|257313.5.peg.877"/>
<dbReference type="eggNOG" id="COG3241">
    <property type="taxonomic scope" value="Bacteria"/>
</dbReference>
<dbReference type="HOGENOM" id="CLU_112845_1_0_4"/>
<dbReference type="Proteomes" id="UP000002676">
    <property type="component" value="Chromosome"/>
</dbReference>
<dbReference type="GO" id="GO:0042597">
    <property type="term" value="C:periplasmic space"/>
    <property type="evidence" value="ECO:0007669"/>
    <property type="project" value="UniProtKB-SubCell"/>
</dbReference>
<dbReference type="GO" id="GO:0005507">
    <property type="term" value="F:copper ion binding"/>
    <property type="evidence" value="ECO:0007669"/>
    <property type="project" value="InterPro"/>
</dbReference>
<dbReference type="GO" id="GO:0009055">
    <property type="term" value="F:electron transfer activity"/>
    <property type="evidence" value="ECO:0007669"/>
    <property type="project" value="InterPro"/>
</dbReference>
<dbReference type="CDD" id="cd13922">
    <property type="entry name" value="Azurin"/>
    <property type="match status" value="1"/>
</dbReference>
<dbReference type="FunFam" id="2.60.40.420:FF:000040">
    <property type="entry name" value="Azurin"/>
    <property type="match status" value="1"/>
</dbReference>
<dbReference type="Gene3D" id="2.60.40.420">
    <property type="entry name" value="Cupredoxins - blue copper proteins"/>
    <property type="match status" value="1"/>
</dbReference>
<dbReference type="InterPro" id="IPR014068">
    <property type="entry name" value="Azurin"/>
</dbReference>
<dbReference type="InterPro" id="IPR000923">
    <property type="entry name" value="BlueCu_1"/>
</dbReference>
<dbReference type="InterPro" id="IPR028871">
    <property type="entry name" value="BlueCu_1_BS"/>
</dbReference>
<dbReference type="InterPro" id="IPR050845">
    <property type="entry name" value="Cu-binding_ET"/>
</dbReference>
<dbReference type="InterPro" id="IPR008972">
    <property type="entry name" value="Cupredoxin"/>
</dbReference>
<dbReference type="NCBIfam" id="TIGR02695">
    <property type="entry name" value="azurin"/>
    <property type="match status" value="1"/>
</dbReference>
<dbReference type="PANTHER" id="PTHR38439">
    <property type="entry name" value="AURACYANIN-B"/>
    <property type="match status" value="1"/>
</dbReference>
<dbReference type="PANTHER" id="PTHR38439:SF2">
    <property type="entry name" value="OUTER MEMBRANE PROTEIN H.8"/>
    <property type="match status" value="1"/>
</dbReference>
<dbReference type="Pfam" id="PF00127">
    <property type="entry name" value="Copper-bind"/>
    <property type="match status" value="1"/>
</dbReference>
<dbReference type="SUPFAM" id="SSF49503">
    <property type="entry name" value="Cupredoxins"/>
    <property type="match status" value="1"/>
</dbReference>
<dbReference type="PROSITE" id="PS00196">
    <property type="entry name" value="COPPER_BLUE"/>
    <property type="match status" value="1"/>
</dbReference>
<keyword id="KW-0186">Copper</keyword>
<keyword id="KW-1015">Disulfide bond</keyword>
<keyword id="KW-0249">Electron transport</keyword>
<keyword id="KW-0479">Metal-binding</keyword>
<keyword id="KW-0574">Periplasm</keyword>
<keyword id="KW-1185">Reference proteome</keyword>
<keyword id="KW-0732">Signal</keyword>
<keyword id="KW-0813">Transport</keyword>
<evidence type="ECO:0000250" key="1"/>
<gene>
    <name type="ordered locus">BP0824</name>
</gene>